<feature type="chain" id="PRO_0000398582" description="FAD-containing monooxygenase EthA">
    <location>
        <begin position="1"/>
        <end position="489"/>
    </location>
</feature>
<feature type="binding site" evidence="2">
    <location>
        <position position="15"/>
    </location>
    <ligand>
        <name>FAD</name>
        <dbReference type="ChEBI" id="CHEBI:57692"/>
    </ligand>
</feature>
<feature type="binding site" evidence="2">
    <location>
        <position position="36"/>
    </location>
    <ligand>
        <name>FAD</name>
        <dbReference type="ChEBI" id="CHEBI:57692"/>
    </ligand>
</feature>
<feature type="binding site" evidence="2">
    <location>
        <begin position="44"/>
        <end position="47"/>
    </location>
    <ligand>
        <name>FAD</name>
        <dbReference type="ChEBI" id="CHEBI:57692"/>
    </ligand>
</feature>
<feature type="binding site" evidence="2">
    <location>
        <begin position="54"/>
        <end position="56"/>
    </location>
    <ligand>
        <name>NADP(+)</name>
        <dbReference type="ChEBI" id="CHEBI:58349"/>
    </ligand>
</feature>
<feature type="binding site" evidence="2">
    <location>
        <position position="56"/>
    </location>
    <ligand>
        <name>FAD</name>
        <dbReference type="ChEBI" id="CHEBI:57692"/>
    </ligand>
</feature>
<feature type="binding site" evidence="2">
    <location>
        <position position="104"/>
    </location>
    <ligand>
        <name>FAD</name>
        <dbReference type="ChEBI" id="CHEBI:57692"/>
    </ligand>
</feature>
<feature type="binding site" evidence="2">
    <location>
        <begin position="183"/>
        <end position="189"/>
    </location>
    <ligand>
        <name>NADP(+)</name>
        <dbReference type="ChEBI" id="CHEBI:58349"/>
    </ligand>
</feature>
<feature type="binding site" evidence="2">
    <location>
        <begin position="207"/>
        <end position="208"/>
    </location>
    <ligand>
        <name>NADP(+)</name>
        <dbReference type="ChEBI" id="CHEBI:58349"/>
    </ligand>
</feature>
<feature type="site" description="Transition state stabilizer" evidence="2">
    <location>
        <position position="292"/>
    </location>
</feature>
<protein>
    <recommendedName>
        <fullName>FAD-containing monooxygenase EthA</fullName>
        <ecNumber evidence="1">1.14.13.-</ecNumber>
    </recommendedName>
    <alternativeName>
        <fullName>Baeyer-Villiger monooxygenase</fullName>
        <shortName>BVMO</shortName>
    </alternativeName>
    <alternativeName>
        <fullName>Prodrug activator EtaA</fullName>
    </alternativeName>
</protein>
<accession>Q7TVI2</accession>
<accession>A0A1R3Y5P0</accession>
<accession>X2BQ38</accession>
<gene>
    <name type="primary">ethA</name>
    <name type="ordered locus">BQ2027_MB3884C</name>
</gene>
<reference key="1">
    <citation type="journal article" date="2003" name="Proc. Natl. Acad. Sci. U.S.A.">
        <title>The complete genome sequence of Mycobacterium bovis.</title>
        <authorList>
            <person name="Garnier T."/>
            <person name="Eiglmeier K."/>
            <person name="Camus J.-C."/>
            <person name="Medina N."/>
            <person name="Mansoor H."/>
            <person name="Pryor M."/>
            <person name="Duthoy S."/>
            <person name="Grondin S."/>
            <person name="Lacroix C."/>
            <person name="Monsempe C."/>
            <person name="Simon S."/>
            <person name="Harris B."/>
            <person name="Atkin R."/>
            <person name="Doggett J."/>
            <person name="Mayes R."/>
            <person name="Keating L."/>
            <person name="Wheeler P.R."/>
            <person name="Parkhill J."/>
            <person name="Barrell B.G."/>
            <person name="Cole S.T."/>
            <person name="Gordon S.V."/>
            <person name="Hewinson R.G."/>
        </authorList>
    </citation>
    <scope>NUCLEOTIDE SEQUENCE [LARGE SCALE GENOMIC DNA]</scope>
    <source>
        <strain>ATCC BAA-935 / AF2122/97</strain>
    </source>
</reference>
<reference key="2">
    <citation type="journal article" date="2017" name="Genome Announc.">
        <title>Updated reference genome sequence and annotation of Mycobacterium bovis AF2122/97.</title>
        <authorList>
            <person name="Malone K.M."/>
            <person name="Farrell D."/>
            <person name="Stuber T.P."/>
            <person name="Schubert O.T."/>
            <person name="Aebersold R."/>
            <person name="Robbe-Austerman S."/>
            <person name="Gordon S.V."/>
        </authorList>
    </citation>
    <scope>NUCLEOTIDE SEQUENCE [LARGE SCALE GENOMIC DNA]</scope>
    <scope>GENOME REANNOTATION</scope>
    <source>
        <strain>ATCC BAA-935 / AF2122/97</strain>
    </source>
</reference>
<reference key="3">
    <citation type="journal article" date="2007" name="Antimicrob. Agents Chemother.">
        <title>EthA, a common activator of thiocarbamide-containing drugs acting on different mycobacterial targets.</title>
        <authorList>
            <person name="Dover L.G."/>
            <person name="Alahari A."/>
            <person name="Gratraud P."/>
            <person name="Gomes J.M."/>
            <person name="Bhowruth V."/>
            <person name="Reynolds R.C."/>
            <person name="Besra G.S."/>
            <person name="Kremer L."/>
        </authorList>
    </citation>
    <scope>FUNCTION AS AN ACTIVATOR OF THIOCARBAMIDE-CONTAINING DRUGS</scope>
    <scope>COFACTOR</scope>
    <scope>INDUCTION</scope>
    <scope>DISRUPTION PHENOTYPE</scope>
</reference>
<organism>
    <name type="scientific">Mycobacterium bovis (strain ATCC BAA-935 / AF2122/97)</name>
    <dbReference type="NCBI Taxonomy" id="233413"/>
    <lineage>
        <taxon>Bacteria</taxon>
        <taxon>Bacillati</taxon>
        <taxon>Actinomycetota</taxon>
        <taxon>Actinomycetes</taxon>
        <taxon>Mycobacteriales</taxon>
        <taxon>Mycobacteriaceae</taxon>
        <taxon>Mycobacterium</taxon>
        <taxon>Mycobacterium tuberculosis complex</taxon>
    </lineage>
</organism>
<proteinExistence type="evidence at protein level"/>
<sequence length="489" mass="55326">MTEHLDVVIVGAGISGVSAAWHLQDRCPTKSYAILEKRESMGGTWDLFRYPGIRSDSDMYTLGFRFRPWTGRQAIADGKPILEYVKSTAAMYGIDRHIRFHHKVISADWSTAENRWTVHIQSHGTLSALTCEFLFLCSGYYNYDEGYSPRFAGSEDFVGPIIHPQHWPEDLDYDAKNIVVIGSGATAVTLVPALADSGAKHVTMLQRSPTYIVSQPDRDGIAEKLNRWLPETMAYTAVRWKNVLRQAAVYSACQKWPRRMRKMFLSLIQRQLPEGYDVRKHFGPHYNPWDQRLCLVPNGDLFRAIRHGKVEVVTDTIERFTATGIRLNSGRELPADIIITATGLNLQLFGGATATIDGQQVDITTTMAYKGMMLSGIPNMAYTVGYTNASWTLKADLVSEFVCRLLNYMDDNGFDTVVVERPGSDVEERPFMEFTPGYVLRSLDELPKQGSRTPWRLNQNYLRDIRLIRRGKIDDEGLRFAKRPAPVGV</sequence>
<dbReference type="EC" id="1.14.13.-" evidence="1"/>
<dbReference type="EMBL" id="LT708304">
    <property type="protein sequence ID" value="SIU02516.1"/>
    <property type="molecule type" value="Genomic_DNA"/>
</dbReference>
<dbReference type="RefSeq" id="NP_857521.1">
    <property type="nucleotide sequence ID" value="NC_002945.3"/>
</dbReference>
<dbReference type="RefSeq" id="WP_003899731.1">
    <property type="nucleotide sequence ID" value="NC_002945.4"/>
</dbReference>
<dbReference type="SMR" id="Q7TVI2"/>
<dbReference type="KEGG" id="mbo:BQ2027_MB3884C"/>
<dbReference type="PATRIC" id="fig|233413.5.peg.4255"/>
<dbReference type="Proteomes" id="UP000001419">
    <property type="component" value="Chromosome"/>
</dbReference>
<dbReference type="GO" id="GO:0005886">
    <property type="term" value="C:plasma membrane"/>
    <property type="evidence" value="ECO:0007669"/>
    <property type="project" value="UniProtKB-SubCell"/>
</dbReference>
<dbReference type="GO" id="GO:0050660">
    <property type="term" value="F:flavin adenine dinucleotide binding"/>
    <property type="evidence" value="ECO:0000250"/>
    <property type="project" value="UniProtKB"/>
</dbReference>
<dbReference type="GO" id="GO:0004499">
    <property type="term" value="F:N,N-dimethylaniline monooxygenase activity"/>
    <property type="evidence" value="ECO:0000315"/>
    <property type="project" value="UniProtKB"/>
</dbReference>
<dbReference type="GO" id="GO:0050661">
    <property type="term" value="F:NADP binding"/>
    <property type="evidence" value="ECO:0007669"/>
    <property type="project" value="InterPro"/>
</dbReference>
<dbReference type="FunFam" id="3.50.50.60:FF:000213">
    <property type="entry name" value="FAD-containing monooxygenase EthA"/>
    <property type="match status" value="1"/>
</dbReference>
<dbReference type="FunFam" id="3.50.50.60:FF:000228">
    <property type="entry name" value="FAD-containing monooxygenase EthA"/>
    <property type="match status" value="1"/>
</dbReference>
<dbReference type="Gene3D" id="3.50.50.60">
    <property type="entry name" value="FAD/NAD(P)-binding domain"/>
    <property type="match status" value="3"/>
</dbReference>
<dbReference type="InterPro" id="IPR051820">
    <property type="entry name" value="FAD-binding_MO"/>
</dbReference>
<dbReference type="InterPro" id="IPR036188">
    <property type="entry name" value="FAD/NAD-bd_sf"/>
</dbReference>
<dbReference type="InterPro" id="IPR020946">
    <property type="entry name" value="Flavin_mOase-like"/>
</dbReference>
<dbReference type="PANTHER" id="PTHR43872">
    <property type="entry name" value="MONOOXYGENASE, PUTATIVE (AFU_ORTHOLOGUE AFUA_8G02570)-RELATED"/>
    <property type="match status" value="1"/>
</dbReference>
<dbReference type="PANTHER" id="PTHR43872:SF1">
    <property type="entry name" value="MONOOXYGENASE, PUTATIVE (AFU_ORTHOLOGUE AFUA_8G02570)-RELATED"/>
    <property type="match status" value="1"/>
</dbReference>
<dbReference type="Pfam" id="PF00743">
    <property type="entry name" value="FMO-like"/>
    <property type="match status" value="1"/>
</dbReference>
<dbReference type="Pfam" id="PF13450">
    <property type="entry name" value="NAD_binding_8"/>
    <property type="match status" value="1"/>
</dbReference>
<dbReference type="SUPFAM" id="SSF51905">
    <property type="entry name" value="FAD/NAD(P)-binding domain"/>
    <property type="match status" value="1"/>
</dbReference>
<comment type="function">
    <text evidence="1">Monooxygenase able to convert a wide range of ketones to the corresponding esters or lactones via a Baeyer-Villiger oxidation reaction. Can act on long-chain aliphatic ketones (2-hexanone to 2-dodecanone) and on aromatic ketones (phenylacetone and benzylacetone). Is also able to catalyze enantioselective sulfoxidation of methyl-p-tolylsulfide. In vivo, likely functions as a BVMO, but the exact nature of the physiological substrate(s) remains to be established.</text>
</comment>
<comment type="function">
    <text evidence="3">Is responsible for the activation of several thiocarbamide-containing pro-drugs, such as ethionamide (ETH), isoxyl (ISO) and thiacetazone (TAC), into reactive species.</text>
</comment>
<comment type="catalytic activity">
    <reaction evidence="1">
        <text>ethionamide + NADPH + O2 + H(+) = ethionamide S-oxide + NADP(+) + H2O</text>
        <dbReference type="Rhea" id="RHEA:47616"/>
        <dbReference type="ChEBI" id="CHEBI:4885"/>
        <dbReference type="ChEBI" id="CHEBI:15377"/>
        <dbReference type="ChEBI" id="CHEBI:15378"/>
        <dbReference type="ChEBI" id="CHEBI:15379"/>
        <dbReference type="ChEBI" id="CHEBI:57783"/>
        <dbReference type="ChEBI" id="CHEBI:58349"/>
        <dbReference type="ChEBI" id="CHEBI:87805"/>
    </reaction>
</comment>
<comment type="cofactor">
    <cofactor evidence="3">
        <name>FAD</name>
        <dbReference type="ChEBI" id="CHEBI:57692"/>
    </cofactor>
    <text evidence="1">Binds 1 FAD per subunit.</text>
</comment>
<comment type="subcellular location">
    <subcellularLocation>
        <location evidence="1">Cell membrane</location>
    </subcellularLocation>
    <text evidence="1">Is most likely membrane-associated.</text>
</comment>
<comment type="induction">
    <text evidence="3">Repressed by EthR.</text>
</comment>
<comment type="disruption phenotype">
    <text evidence="3">Deletion of this gene leads to a strong resistance to ETH, ISO and TAC.</text>
</comment>
<comment type="similarity">
    <text evidence="4">Belongs to the FAD-binding monooxygenase family.</text>
</comment>
<evidence type="ECO:0000250" key="1">
    <source>
        <dbReference type="UniProtKB" id="P9WNF9"/>
    </source>
</evidence>
<evidence type="ECO:0000250" key="2">
    <source>
        <dbReference type="UniProtKB" id="Q47PU3"/>
    </source>
</evidence>
<evidence type="ECO:0000269" key="3">
    <source>
    </source>
</evidence>
<evidence type="ECO:0000305" key="4"/>
<name>ETHA_MYCBO</name>
<keyword id="KW-1003">Cell membrane</keyword>
<keyword id="KW-0274">FAD</keyword>
<keyword id="KW-0285">Flavoprotein</keyword>
<keyword id="KW-0472">Membrane</keyword>
<keyword id="KW-0503">Monooxygenase</keyword>
<keyword id="KW-0521">NADP</keyword>
<keyword id="KW-0560">Oxidoreductase</keyword>
<keyword id="KW-1185">Reference proteome</keyword>